<protein>
    <recommendedName>
        <fullName>tRNA (guanine-N(1)-)-methyltransferase</fullName>
        <ecNumber>2.1.1.228</ecNumber>
    </recommendedName>
    <alternativeName>
        <fullName>M1G-methyltransferase</fullName>
    </alternativeName>
    <alternativeName>
        <fullName>tRNA [GM37] methyltransferase</fullName>
    </alternativeName>
</protein>
<keyword id="KW-0963">Cytoplasm</keyword>
<keyword id="KW-0489">Methyltransferase</keyword>
<keyword id="KW-0949">S-adenosyl-L-methionine</keyword>
<keyword id="KW-0808">Transferase</keyword>
<keyword id="KW-0819">tRNA processing</keyword>
<comment type="function">
    <text evidence="1">Specifically methylates guanosine-37 in various tRNAs.</text>
</comment>
<comment type="catalytic activity">
    <reaction>
        <text>guanosine(37) in tRNA + S-adenosyl-L-methionine = N(1)-methylguanosine(37) in tRNA + S-adenosyl-L-homocysteine + H(+)</text>
        <dbReference type="Rhea" id="RHEA:36899"/>
        <dbReference type="Rhea" id="RHEA-COMP:10145"/>
        <dbReference type="Rhea" id="RHEA-COMP:10147"/>
        <dbReference type="ChEBI" id="CHEBI:15378"/>
        <dbReference type="ChEBI" id="CHEBI:57856"/>
        <dbReference type="ChEBI" id="CHEBI:59789"/>
        <dbReference type="ChEBI" id="CHEBI:73542"/>
        <dbReference type="ChEBI" id="CHEBI:74269"/>
        <dbReference type="EC" id="2.1.1.228"/>
    </reaction>
</comment>
<comment type="subunit">
    <text evidence="1">Homodimer.</text>
</comment>
<comment type="subcellular location">
    <subcellularLocation>
        <location evidence="2">Cytoplasm</location>
    </subcellularLocation>
</comment>
<comment type="similarity">
    <text evidence="2">Belongs to the RNA methyltransferase TrmD family.</text>
</comment>
<gene>
    <name type="primary">trmD</name>
</gene>
<evidence type="ECO:0000250" key="1"/>
<evidence type="ECO:0000305" key="2"/>
<reference key="1">
    <citation type="journal article" date="1994" name="Gene">
        <title>Sequences of the Serratia marcescens rplS and trmD genes.</title>
        <authorList>
            <person name="Jin S."/>
            <person name="Benedik M.J."/>
        </authorList>
    </citation>
    <scope>NUCLEOTIDE SEQUENCE [GENOMIC DNA]</scope>
    <source>
        <strain>SM6</strain>
    </source>
</reference>
<sequence>MFIGIVSLFPEMFRAITDYGVTGRAVKNGLLSVQCWSPRDFTYDRHRTVDDRPYGGGPGMLMMVQPLREAIHAAKAAAGEGAKVIYLSPQGRKLDHTGVCELAANQKMILVCGRYEGIDERVIQTEIDEEWSIGDYVLSGGELPAMTLIDSVARFIPGVLGHQASAEEDSFADGLLDCPHYTRPEVLEGMEVPPVLLSGNHAEIRRWRLKQSLGRTWLRRPELLESLALTDEQAVLLAEFQREHQARQQDYEGNV</sequence>
<organism>
    <name type="scientific">Serratia marcescens</name>
    <dbReference type="NCBI Taxonomy" id="615"/>
    <lineage>
        <taxon>Bacteria</taxon>
        <taxon>Pseudomonadati</taxon>
        <taxon>Pseudomonadota</taxon>
        <taxon>Gammaproteobacteria</taxon>
        <taxon>Enterobacterales</taxon>
        <taxon>Yersiniaceae</taxon>
        <taxon>Serratia</taxon>
    </lineage>
</organism>
<accession>P36244</accession>
<dbReference type="EC" id="2.1.1.228"/>
<dbReference type="EMBL" id="L23334">
    <property type="protein sequence ID" value="AAA50783.1"/>
    <property type="molecule type" value="Genomic_DNA"/>
</dbReference>
<dbReference type="SMR" id="P36244"/>
<dbReference type="STRING" id="273526.SMDB11_0173"/>
<dbReference type="GO" id="GO:0005829">
    <property type="term" value="C:cytosol"/>
    <property type="evidence" value="ECO:0007669"/>
    <property type="project" value="TreeGrafter"/>
</dbReference>
<dbReference type="GO" id="GO:0052906">
    <property type="term" value="F:tRNA (guanine(37)-N1)-methyltransferase activity"/>
    <property type="evidence" value="ECO:0007669"/>
    <property type="project" value="UniProtKB-UniRule"/>
</dbReference>
<dbReference type="GO" id="GO:0002939">
    <property type="term" value="P:tRNA N1-guanine methylation"/>
    <property type="evidence" value="ECO:0007669"/>
    <property type="project" value="TreeGrafter"/>
</dbReference>
<dbReference type="CDD" id="cd18080">
    <property type="entry name" value="TrmD-like"/>
    <property type="match status" value="1"/>
</dbReference>
<dbReference type="FunFam" id="1.10.1270.20:FF:000001">
    <property type="entry name" value="tRNA (guanine-N(1)-)-methyltransferase"/>
    <property type="match status" value="1"/>
</dbReference>
<dbReference type="FunFam" id="3.40.1280.10:FF:000001">
    <property type="entry name" value="tRNA (guanine-N(1)-)-methyltransferase"/>
    <property type="match status" value="1"/>
</dbReference>
<dbReference type="Gene3D" id="3.40.1280.10">
    <property type="match status" value="1"/>
</dbReference>
<dbReference type="Gene3D" id="1.10.1270.20">
    <property type="entry name" value="tRNA(m1g37)methyltransferase, domain 2"/>
    <property type="match status" value="1"/>
</dbReference>
<dbReference type="HAMAP" id="MF_00605">
    <property type="entry name" value="TrmD"/>
    <property type="match status" value="1"/>
</dbReference>
<dbReference type="InterPro" id="IPR029028">
    <property type="entry name" value="Alpha/beta_knot_MTases"/>
</dbReference>
<dbReference type="InterPro" id="IPR023148">
    <property type="entry name" value="tRNA_m1G_MeTrfase_C_sf"/>
</dbReference>
<dbReference type="InterPro" id="IPR002649">
    <property type="entry name" value="tRNA_m1G_MeTrfase_TrmD"/>
</dbReference>
<dbReference type="InterPro" id="IPR029026">
    <property type="entry name" value="tRNA_m1G_MTases_N"/>
</dbReference>
<dbReference type="InterPro" id="IPR016009">
    <property type="entry name" value="tRNA_MeTrfase_TRMD/TRM10"/>
</dbReference>
<dbReference type="NCBIfam" id="NF000648">
    <property type="entry name" value="PRK00026.1"/>
    <property type="match status" value="1"/>
</dbReference>
<dbReference type="NCBIfam" id="TIGR00088">
    <property type="entry name" value="trmD"/>
    <property type="match status" value="1"/>
</dbReference>
<dbReference type="PANTHER" id="PTHR46417">
    <property type="entry name" value="TRNA (GUANINE-N(1)-)-METHYLTRANSFERASE"/>
    <property type="match status" value="1"/>
</dbReference>
<dbReference type="PANTHER" id="PTHR46417:SF1">
    <property type="entry name" value="TRNA (GUANINE-N(1)-)-METHYLTRANSFERASE"/>
    <property type="match status" value="1"/>
</dbReference>
<dbReference type="Pfam" id="PF01746">
    <property type="entry name" value="tRNA_m1G_MT"/>
    <property type="match status" value="1"/>
</dbReference>
<dbReference type="PIRSF" id="PIRSF000386">
    <property type="entry name" value="tRNA_mtase"/>
    <property type="match status" value="1"/>
</dbReference>
<dbReference type="SUPFAM" id="SSF75217">
    <property type="entry name" value="alpha/beta knot"/>
    <property type="match status" value="1"/>
</dbReference>
<feature type="chain" id="PRO_0000060451" description="tRNA (guanine-N(1)-)-methyltransferase">
    <location>
        <begin position="1"/>
        <end position="255"/>
    </location>
</feature>
<feature type="binding site" evidence="1">
    <location>
        <position position="113"/>
    </location>
    <ligand>
        <name>S-adenosyl-L-methionine</name>
        <dbReference type="ChEBI" id="CHEBI:59789"/>
    </ligand>
</feature>
<feature type="binding site" evidence="1">
    <location>
        <begin position="133"/>
        <end position="138"/>
    </location>
    <ligand>
        <name>S-adenosyl-L-methionine</name>
        <dbReference type="ChEBI" id="CHEBI:59789"/>
    </ligand>
</feature>
<name>TRMD_SERMA</name>
<proteinExistence type="inferred from homology"/>